<organism>
    <name type="scientific">Sphingopyxis alaskensis (strain DSM 13593 / LMG 18877 / RB2256)</name>
    <name type="common">Sphingomonas alaskensis</name>
    <dbReference type="NCBI Taxonomy" id="317655"/>
    <lineage>
        <taxon>Bacteria</taxon>
        <taxon>Pseudomonadati</taxon>
        <taxon>Pseudomonadota</taxon>
        <taxon>Alphaproteobacteria</taxon>
        <taxon>Sphingomonadales</taxon>
        <taxon>Sphingomonadaceae</taxon>
        <taxon>Sphingopyxis</taxon>
    </lineage>
</organism>
<sequence length="513" mass="53978">MATAPATEKKAPAKKAAAPKAAAPKKAAAPKAAAPVGAATGRIAQVIGAVVDVQFTGELPAILNALETDNNGNRLVLEVAQHLGENTVRTIAMDATDGLTRGQPVRDTGAQISVPVGPQTLGRILNVIGEPIDERGPVNSDMTAPIHAKAPEFVDQSTEASILVTGIKVIDLIAPYAKGGKIGLFGGAGVGKTVLIQELINNIAKGHGGVSVFAGVGERTREGNDLYHEFLDAGVIAKDADGNPTPDGSKVALVFGQMNEPPGARARVALSGLTMAEYFRDQEGQDVLFFVDNIFRFTQAGSEVSALLGRIPSAVGYQPTLSTDMGALQERITSTTKGSITSVQAIYVPADDLTDPAPATSFAHLDATTTLSRAISELGIYPAVDPLDSTSRVLTPAIVGQEHYETARRVQETLQKYKSLQDIIAILGMDELSEEDKLVVARARKIQRFLSQPFHVAEVFTGIPGKFVPIEETVKSFKAVVDGEYDHLPEAAFYMVGGIDEAVAKAAKLAEEA</sequence>
<comment type="function">
    <text evidence="1">Produces ATP from ADP in the presence of a proton gradient across the membrane. The catalytic sites are hosted primarily by the beta subunits.</text>
</comment>
<comment type="catalytic activity">
    <reaction evidence="1">
        <text>ATP + H2O + 4 H(+)(in) = ADP + phosphate + 5 H(+)(out)</text>
        <dbReference type="Rhea" id="RHEA:57720"/>
        <dbReference type="ChEBI" id="CHEBI:15377"/>
        <dbReference type="ChEBI" id="CHEBI:15378"/>
        <dbReference type="ChEBI" id="CHEBI:30616"/>
        <dbReference type="ChEBI" id="CHEBI:43474"/>
        <dbReference type="ChEBI" id="CHEBI:456216"/>
        <dbReference type="EC" id="7.1.2.2"/>
    </reaction>
</comment>
<comment type="subunit">
    <text evidence="1">F-type ATPases have 2 components, CF(1) - the catalytic core - and CF(0) - the membrane proton channel. CF(1) has five subunits: alpha(3), beta(3), gamma(1), delta(1), epsilon(1). CF(0) has three main subunits: a(1), b(2) and c(9-12). The alpha and beta chains form an alternating ring which encloses part of the gamma chain. CF(1) is attached to CF(0) by a central stalk formed by the gamma and epsilon chains, while a peripheral stalk is formed by the delta and b chains.</text>
</comment>
<comment type="subcellular location">
    <subcellularLocation>
        <location evidence="1">Cell inner membrane</location>
        <topology evidence="1">Peripheral membrane protein</topology>
    </subcellularLocation>
</comment>
<comment type="similarity">
    <text evidence="1">Belongs to the ATPase alpha/beta chains family.</text>
</comment>
<name>ATPB_SPHAL</name>
<keyword id="KW-0066">ATP synthesis</keyword>
<keyword id="KW-0067">ATP-binding</keyword>
<keyword id="KW-0997">Cell inner membrane</keyword>
<keyword id="KW-1003">Cell membrane</keyword>
<keyword id="KW-0139">CF(1)</keyword>
<keyword id="KW-0375">Hydrogen ion transport</keyword>
<keyword id="KW-0406">Ion transport</keyword>
<keyword id="KW-0472">Membrane</keyword>
<keyword id="KW-0547">Nucleotide-binding</keyword>
<keyword id="KW-1185">Reference proteome</keyword>
<keyword id="KW-1278">Translocase</keyword>
<keyword id="KW-0813">Transport</keyword>
<proteinExistence type="inferred from homology"/>
<feature type="chain" id="PRO_0000254380" description="ATP synthase subunit beta">
    <location>
        <begin position="1"/>
        <end position="513"/>
    </location>
</feature>
<feature type="region of interest" description="Disordered" evidence="2">
    <location>
        <begin position="1"/>
        <end position="29"/>
    </location>
</feature>
<feature type="compositionally biased region" description="Low complexity" evidence="2">
    <location>
        <begin position="14"/>
        <end position="29"/>
    </location>
</feature>
<feature type="binding site" evidence="1">
    <location>
        <begin position="186"/>
        <end position="193"/>
    </location>
    <ligand>
        <name>ATP</name>
        <dbReference type="ChEBI" id="CHEBI:30616"/>
    </ligand>
</feature>
<evidence type="ECO:0000255" key="1">
    <source>
        <dbReference type="HAMAP-Rule" id="MF_01347"/>
    </source>
</evidence>
<evidence type="ECO:0000256" key="2">
    <source>
        <dbReference type="SAM" id="MobiDB-lite"/>
    </source>
</evidence>
<dbReference type="EC" id="7.1.2.2" evidence="1"/>
<dbReference type="EMBL" id="CP000356">
    <property type="protein sequence ID" value="ABF53997.1"/>
    <property type="molecule type" value="Genomic_DNA"/>
</dbReference>
<dbReference type="RefSeq" id="WP_011542573.1">
    <property type="nucleotide sequence ID" value="NC_008048.1"/>
</dbReference>
<dbReference type="SMR" id="Q1GQS5"/>
<dbReference type="STRING" id="317655.Sala_2288"/>
<dbReference type="KEGG" id="sal:Sala_2288"/>
<dbReference type="eggNOG" id="COG0055">
    <property type="taxonomic scope" value="Bacteria"/>
</dbReference>
<dbReference type="HOGENOM" id="CLU_022398_0_2_5"/>
<dbReference type="OrthoDB" id="9801639at2"/>
<dbReference type="Proteomes" id="UP000006578">
    <property type="component" value="Chromosome"/>
</dbReference>
<dbReference type="GO" id="GO:0005886">
    <property type="term" value="C:plasma membrane"/>
    <property type="evidence" value="ECO:0007669"/>
    <property type="project" value="UniProtKB-SubCell"/>
</dbReference>
<dbReference type="GO" id="GO:0045259">
    <property type="term" value="C:proton-transporting ATP synthase complex"/>
    <property type="evidence" value="ECO:0007669"/>
    <property type="project" value="UniProtKB-KW"/>
</dbReference>
<dbReference type="GO" id="GO:0005524">
    <property type="term" value="F:ATP binding"/>
    <property type="evidence" value="ECO:0007669"/>
    <property type="project" value="UniProtKB-UniRule"/>
</dbReference>
<dbReference type="GO" id="GO:0016887">
    <property type="term" value="F:ATP hydrolysis activity"/>
    <property type="evidence" value="ECO:0007669"/>
    <property type="project" value="InterPro"/>
</dbReference>
<dbReference type="GO" id="GO:0046933">
    <property type="term" value="F:proton-transporting ATP synthase activity, rotational mechanism"/>
    <property type="evidence" value="ECO:0007669"/>
    <property type="project" value="UniProtKB-UniRule"/>
</dbReference>
<dbReference type="CDD" id="cd18110">
    <property type="entry name" value="ATP-synt_F1_beta_C"/>
    <property type="match status" value="1"/>
</dbReference>
<dbReference type="CDD" id="cd18115">
    <property type="entry name" value="ATP-synt_F1_beta_N"/>
    <property type="match status" value="1"/>
</dbReference>
<dbReference type="CDD" id="cd01133">
    <property type="entry name" value="F1-ATPase_beta_CD"/>
    <property type="match status" value="1"/>
</dbReference>
<dbReference type="FunFam" id="1.10.1140.10:FF:000001">
    <property type="entry name" value="ATP synthase subunit beta"/>
    <property type="match status" value="1"/>
</dbReference>
<dbReference type="FunFam" id="2.40.10.170:FF:000005">
    <property type="entry name" value="ATP synthase subunit beta"/>
    <property type="match status" value="1"/>
</dbReference>
<dbReference type="FunFam" id="3.40.50.300:FF:000026">
    <property type="entry name" value="ATP synthase subunit beta"/>
    <property type="match status" value="1"/>
</dbReference>
<dbReference type="Gene3D" id="2.40.10.170">
    <property type="match status" value="1"/>
</dbReference>
<dbReference type="Gene3D" id="1.10.1140.10">
    <property type="entry name" value="Bovine Mitochondrial F1-atpase, Atp Synthase Beta Chain, Chain D, domain 3"/>
    <property type="match status" value="1"/>
</dbReference>
<dbReference type="Gene3D" id="3.40.50.300">
    <property type="entry name" value="P-loop containing nucleotide triphosphate hydrolases"/>
    <property type="match status" value="1"/>
</dbReference>
<dbReference type="HAMAP" id="MF_01347">
    <property type="entry name" value="ATP_synth_beta_bact"/>
    <property type="match status" value="1"/>
</dbReference>
<dbReference type="InterPro" id="IPR003593">
    <property type="entry name" value="AAA+_ATPase"/>
</dbReference>
<dbReference type="InterPro" id="IPR055190">
    <property type="entry name" value="ATP-synt_VA_C"/>
</dbReference>
<dbReference type="InterPro" id="IPR005722">
    <property type="entry name" value="ATP_synth_F1_bsu"/>
</dbReference>
<dbReference type="InterPro" id="IPR020003">
    <property type="entry name" value="ATPase_a/bsu_AS"/>
</dbReference>
<dbReference type="InterPro" id="IPR050053">
    <property type="entry name" value="ATPase_alpha/beta_chains"/>
</dbReference>
<dbReference type="InterPro" id="IPR004100">
    <property type="entry name" value="ATPase_F1/V1/A1_a/bsu_N"/>
</dbReference>
<dbReference type="InterPro" id="IPR036121">
    <property type="entry name" value="ATPase_F1/V1/A1_a/bsu_N_sf"/>
</dbReference>
<dbReference type="InterPro" id="IPR000194">
    <property type="entry name" value="ATPase_F1/V1/A1_a/bsu_nucl-bd"/>
</dbReference>
<dbReference type="InterPro" id="IPR024034">
    <property type="entry name" value="ATPase_F1/V1_b/a_C"/>
</dbReference>
<dbReference type="InterPro" id="IPR027417">
    <property type="entry name" value="P-loop_NTPase"/>
</dbReference>
<dbReference type="NCBIfam" id="TIGR01039">
    <property type="entry name" value="atpD"/>
    <property type="match status" value="1"/>
</dbReference>
<dbReference type="PANTHER" id="PTHR15184">
    <property type="entry name" value="ATP SYNTHASE"/>
    <property type="match status" value="1"/>
</dbReference>
<dbReference type="PANTHER" id="PTHR15184:SF71">
    <property type="entry name" value="ATP SYNTHASE SUBUNIT BETA, MITOCHONDRIAL"/>
    <property type="match status" value="1"/>
</dbReference>
<dbReference type="Pfam" id="PF00006">
    <property type="entry name" value="ATP-synt_ab"/>
    <property type="match status" value="1"/>
</dbReference>
<dbReference type="Pfam" id="PF02874">
    <property type="entry name" value="ATP-synt_ab_N"/>
    <property type="match status" value="1"/>
</dbReference>
<dbReference type="Pfam" id="PF22919">
    <property type="entry name" value="ATP-synt_VA_C"/>
    <property type="match status" value="1"/>
</dbReference>
<dbReference type="PIRSF" id="PIRSF039072">
    <property type="entry name" value="ATPase_subunit_beta"/>
    <property type="match status" value="1"/>
</dbReference>
<dbReference type="SMART" id="SM00382">
    <property type="entry name" value="AAA"/>
    <property type="match status" value="1"/>
</dbReference>
<dbReference type="SUPFAM" id="SSF47917">
    <property type="entry name" value="C-terminal domain of alpha and beta subunits of F1 ATP synthase"/>
    <property type="match status" value="1"/>
</dbReference>
<dbReference type="SUPFAM" id="SSF50615">
    <property type="entry name" value="N-terminal domain of alpha and beta subunits of F1 ATP synthase"/>
    <property type="match status" value="1"/>
</dbReference>
<dbReference type="SUPFAM" id="SSF52540">
    <property type="entry name" value="P-loop containing nucleoside triphosphate hydrolases"/>
    <property type="match status" value="1"/>
</dbReference>
<dbReference type="PROSITE" id="PS00152">
    <property type="entry name" value="ATPASE_ALPHA_BETA"/>
    <property type="match status" value="1"/>
</dbReference>
<accession>Q1GQS5</accession>
<protein>
    <recommendedName>
        <fullName evidence="1">ATP synthase subunit beta</fullName>
        <ecNumber evidence="1">7.1.2.2</ecNumber>
    </recommendedName>
    <alternativeName>
        <fullName evidence="1">ATP synthase F1 sector subunit beta</fullName>
    </alternativeName>
    <alternativeName>
        <fullName evidence="1">F-ATPase subunit beta</fullName>
    </alternativeName>
</protein>
<reference key="1">
    <citation type="journal article" date="2009" name="Proc. Natl. Acad. Sci. U.S.A.">
        <title>The genomic basis of trophic strategy in marine bacteria.</title>
        <authorList>
            <person name="Lauro F.M."/>
            <person name="McDougald D."/>
            <person name="Thomas T."/>
            <person name="Williams T.J."/>
            <person name="Egan S."/>
            <person name="Rice S."/>
            <person name="DeMaere M.Z."/>
            <person name="Ting L."/>
            <person name="Ertan H."/>
            <person name="Johnson J."/>
            <person name="Ferriera S."/>
            <person name="Lapidus A."/>
            <person name="Anderson I."/>
            <person name="Kyrpides N."/>
            <person name="Munk A.C."/>
            <person name="Detter C."/>
            <person name="Han C.S."/>
            <person name="Brown M.V."/>
            <person name="Robb F.T."/>
            <person name="Kjelleberg S."/>
            <person name="Cavicchioli R."/>
        </authorList>
    </citation>
    <scope>NUCLEOTIDE SEQUENCE [LARGE SCALE GENOMIC DNA]</scope>
    <source>
        <strain>DSM 13593 / LMG 18877 / RB2256</strain>
    </source>
</reference>
<gene>
    <name evidence="1" type="primary">atpD</name>
    <name type="ordered locus">Sala_2288</name>
</gene>